<name>RL24_ANAMM</name>
<sequence>MMAKIVSGDDVIVIAGSDKGKIGKVVKILRKGGHVVAKVAGVALCRKSVKPSKDREGGIFSVERFIDISNIALFDSEAGVRTKVGYKFVDGKKVRYLKGSGRVLD</sequence>
<keyword id="KW-0687">Ribonucleoprotein</keyword>
<keyword id="KW-0689">Ribosomal protein</keyword>
<keyword id="KW-0694">RNA-binding</keyword>
<keyword id="KW-0699">rRNA-binding</keyword>
<dbReference type="EMBL" id="CP000030">
    <property type="protein sequence ID" value="AAV86811.1"/>
    <property type="molecule type" value="Genomic_DNA"/>
</dbReference>
<dbReference type="SMR" id="Q5PA69"/>
<dbReference type="KEGG" id="ama:AM900"/>
<dbReference type="HOGENOM" id="CLU_093315_2_2_5"/>
<dbReference type="GO" id="GO:1990904">
    <property type="term" value="C:ribonucleoprotein complex"/>
    <property type="evidence" value="ECO:0007669"/>
    <property type="project" value="UniProtKB-KW"/>
</dbReference>
<dbReference type="GO" id="GO:0005840">
    <property type="term" value="C:ribosome"/>
    <property type="evidence" value="ECO:0007669"/>
    <property type="project" value="UniProtKB-KW"/>
</dbReference>
<dbReference type="GO" id="GO:0019843">
    <property type="term" value="F:rRNA binding"/>
    <property type="evidence" value="ECO:0007669"/>
    <property type="project" value="UniProtKB-UniRule"/>
</dbReference>
<dbReference type="GO" id="GO:0003735">
    <property type="term" value="F:structural constituent of ribosome"/>
    <property type="evidence" value="ECO:0007669"/>
    <property type="project" value="InterPro"/>
</dbReference>
<dbReference type="GO" id="GO:0006412">
    <property type="term" value="P:translation"/>
    <property type="evidence" value="ECO:0007669"/>
    <property type="project" value="UniProtKB-UniRule"/>
</dbReference>
<dbReference type="CDD" id="cd06089">
    <property type="entry name" value="KOW_RPL26"/>
    <property type="match status" value="1"/>
</dbReference>
<dbReference type="Gene3D" id="2.30.30.30">
    <property type="match status" value="1"/>
</dbReference>
<dbReference type="HAMAP" id="MF_01326_B">
    <property type="entry name" value="Ribosomal_uL24_B"/>
    <property type="match status" value="1"/>
</dbReference>
<dbReference type="InterPro" id="IPR005824">
    <property type="entry name" value="KOW"/>
</dbReference>
<dbReference type="InterPro" id="IPR014722">
    <property type="entry name" value="Rib_uL2_dom2"/>
</dbReference>
<dbReference type="InterPro" id="IPR003256">
    <property type="entry name" value="Ribosomal_uL24"/>
</dbReference>
<dbReference type="InterPro" id="IPR005825">
    <property type="entry name" value="Ribosomal_uL24_CS"/>
</dbReference>
<dbReference type="InterPro" id="IPR041988">
    <property type="entry name" value="Ribosomal_uL24_KOW"/>
</dbReference>
<dbReference type="InterPro" id="IPR008991">
    <property type="entry name" value="Translation_prot_SH3-like_sf"/>
</dbReference>
<dbReference type="NCBIfam" id="TIGR01079">
    <property type="entry name" value="rplX_bact"/>
    <property type="match status" value="1"/>
</dbReference>
<dbReference type="PANTHER" id="PTHR12903">
    <property type="entry name" value="MITOCHONDRIAL RIBOSOMAL PROTEIN L24"/>
    <property type="match status" value="1"/>
</dbReference>
<dbReference type="Pfam" id="PF00467">
    <property type="entry name" value="KOW"/>
    <property type="match status" value="1"/>
</dbReference>
<dbReference type="Pfam" id="PF17136">
    <property type="entry name" value="ribosomal_L24"/>
    <property type="match status" value="1"/>
</dbReference>
<dbReference type="SMART" id="SM00739">
    <property type="entry name" value="KOW"/>
    <property type="match status" value="1"/>
</dbReference>
<dbReference type="SUPFAM" id="SSF50104">
    <property type="entry name" value="Translation proteins SH3-like domain"/>
    <property type="match status" value="1"/>
</dbReference>
<dbReference type="PROSITE" id="PS01108">
    <property type="entry name" value="RIBOSOMAL_L24"/>
    <property type="match status" value="1"/>
</dbReference>
<organism>
    <name type="scientific">Anaplasma marginale (strain St. Maries)</name>
    <dbReference type="NCBI Taxonomy" id="234826"/>
    <lineage>
        <taxon>Bacteria</taxon>
        <taxon>Pseudomonadati</taxon>
        <taxon>Pseudomonadota</taxon>
        <taxon>Alphaproteobacteria</taxon>
        <taxon>Rickettsiales</taxon>
        <taxon>Anaplasmataceae</taxon>
        <taxon>Anaplasma</taxon>
    </lineage>
</organism>
<comment type="function">
    <text evidence="1">One of two assembly initiator proteins, it binds directly to the 5'-end of the 23S rRNA, where it nucleates assembly of the 50S subunit.</text>
</comment>
<comment type="function">
    <text evidence="1">One of the proteins that surrounds the polypeptide exit tunnel on the outside of the subunit.</text>
</comment>
<comment type="subunit">
    <text evidence="1">Part of the 50S ribosomal subunit.</text>
</comment>
<comment type="similarity">
    <text evidence="1">Belongs to the universal ribosomal protein uL24 family.</text>
</comment>
<accession>Q5PA69</accession>
<feature type="chain" id="PRO_0000241558" description="Large ribosomal subunit protein uL24">
    <location>
        <begin position="1"/>
        <end position="105"/>
    </location>
</feature>
<proteinExistence type="inferred from homology"/>
<reference key="1">
    <citation type="journal article" date="2005" name="Proc. Natl. Acad. Sci. U.S.A.">
        <title>Complete genome sequencing of Anaplasma marginale reveals that the surface is skewed to two superfamilies of outer membrane proteins.</title>
        <authorList>
            <person name="Brayton K.A."/>
            <person name="Kappmeyer L.S."/>
            <person name="Herndon D.R."/>
            <person name="Dark M.J."/>
            <person name="Tibbals D.L."/>
            <person name="Palmer G.H."/>
            <person name="McGuire T.C."/>
            <person name="Knowles D.P. Jr."/>
        </authorList>
    </citation>
    <scope>NUCLEOTIDE SEQUENCE [LARGE SCALE GENOMIC DNA]</scope>
    <source>
        <strain>St. Maries</strain>
    </source>
</reference>
<protein>
    <recommendedName>
        <fullName evidence="1">Large ribosomal subunit protein uL24</fullName>
    </recommendedName>
    <alternativeName>
        <fullName evidence="2">50S ribosomal protein L24</fullName>
    </alternativeName>
</protein>
<gene>
    <name evidence="1" type="primary">rplX</name>
    <name type="ordered locus">AM900</name>
</gene>
<evidence type="ECO:0000255" key="1">
    <source>
        <dbReference type="HAMAP-Rule" id="MF_01326"/>
    </source>
</evidence>
<evidence type="ECO:0000305" key="2"/>